<name>THI4_ASPOR</name>
<feature type="chain" id="PRO_0000034053" description="Thiamine thiazole synthase">
    <location>
        <begin position="1"/>
        <end position="327"/>
    </location>
</feature>
<feature type="binding site" evidence="1">
    <location>
        <position position="86"/>
    </location>
    <ligand>
        <name>substrate</name>
    </ligand>
</feature>
<feature type="binding site" evidence="1">
    <location>
        <begin position="107"/>
        <end position="108"/>
    </location>
    <ligand>
        <name>substrate</name>
    </ligand>
</feature>
<feature type="binding site" evidence="1">
    <location>
        <position position="115"/>
    </location>
    <ligand>
        <name>substrate</name>
    </ligand>
</feature>
<feature type="binding site" evidence="1">
    <location>
        <position position="182"/>
    </location>
    <ligand>
        <name>substrate</name>
    </ligand>
</feature>
<feature type="binding site" evidence="1">
    <location>
        <position position="218"/>
    </location>
    <ligand>
        <name>substrate</name>
    </ligand>
</feature>
<feature type="binding site" evidence="1">
    <location>
        <position position="233"/>
    </location>
    <ligand>
        <name>substrate</name>
    </ligand>
</feature>
<feature type="binding site" evidence="1">
    <location>
        <position position="285"/>
    </location>
    <ligand>
        <name>substrate</name>
    </ligand>
</feature>
<feature type="binding site" evidence="1">
    <location>
        <begin position="295"/>
        <end position="297"/>
    </location>
    <ligand>
        <name>substrate</name>
    </ligand>
</feature>
<feature type="modified residue" description="2,3-didehydroalanine (Cys)" evidence="1">
    <location>
        <position position="216"/>
    </location>
</feature>
<feature type="sequence conflict" description="In Ref. 1; AAF25444." evidence="2" ref="1">
    <original>A</original>
    <variation>V</variation>
    <location>
        <position position="27"/>
    </location>
</feature>
<accession>Q9UUZ9</accession>
<accession>Q2UM94</accession>
<dbReference type="EC" id="2.4.2.60" evidence="1"/>
<dbReference type="EMBL" id="AF217503">
    <property type="protein sequence ID" value="AAF25444.1"/>
    <property type="molecule type" value="Genomic_DNA"/>
</dbReference>
<dbReference type="EMBL" id="BA000050">
    <property type="protein sequence ID" value="BAE57321.1"/>
    <property type="molecule type" value="Genomic_DNA"/>
</dbReference>
<dbReference type="PIR" id="JC7337">
    <property type="entry name" value="JC7337"/>
</dbReference>
<dbReference type="RefSeq" id="XP_001819323.1">
    <property type="nucleotide sequence ID" value="XM_001819271.2"/>
</dbReference>
<dbReference type="SMR" id="Q9UUZ9"/>
<dbReference type="STRING" id="510516.Q9UUZ9"/>
<dbReference type="EnsemblFungi" id="BAE57321">
    <property type="protein sequence ID" value="BAE57321"/>
    <property type="gene ID" value="AO090003000090"/>
</dbReference>
<dbReference type="GeneID" id="5991306"/>
<dbReference type="KEGG" id="aor:AO090003000090"/>
<dbReference type="VEuPathDB" id="FungiDB:AO090003000090"/>
<dbReference type="HOGENOM" id="CLU_053727_0_0_1"/>
<dbReference type="OMA" id="MFPRIVV"/>
<dbReference type="OrthoDB" id="75120at5052"/>
<dbReference type="Proteomes" id="UP000006564">
    <property type="component" value="Chromosome 2"/>
</dbReference>
<dbReference type="GO" id="GO:0005829">
    <property type="term" value="C:cytosol"/>
    <property type="evidence" value="ECO:0007669"/>
    <property type="project" value="UniProtKB-UniRule"/>
</dbReference>
<dbReference type="GO" id="GO:0005634">
    <property type="term" value="C:nucleus"/>
    <property type="evidence" value="ECO:0007669"/>
    <property type="project" value="UniProtKB-SubCell"/>
</dbReference>
<dbReference type="GO" id="GO:0160205">
    <property type="term" value="F:cysteine-dependent adenosine diphosphate thiazole synthase activity"/>
    <property type="evidence" value="ECO:0007669"/>
    <property type="project" value="UniProtKB-EC"/>
</dbReference>
<dbReference type="GO" id="GO:0008198">
    <property type="term" value="F:ferrous iron binding"/>
    <property type="evidence" value="ECO:0007669"/>
    <property type="project" value="EnsemblFungi"/>
</dbReference>
<dbReference type="GO" id="GO:0000002">
    <property type="term" value="P:mitochondrial genome maintenance"/>
    <property type="evidence" value="ECO:0007669"/>
    <property type="project" value="EnsemblFungi"/>
</dbReference>
<dbReference type="GO" id="GO:0009228">
    <property type="term" value="P:thiamine biosynthetic process"/>
    <property type="evidence" value="ECO:0007669"/>
    <property type="project" value="UniProtKB-UniRule"/>
</dbReference>
<dbReference type="GO" id="GO:0052837">
    <property type="term" value="P:thiazole biosynthetic process"/>
    <property type="evidence" value="ECO:0007669"/>
    <property type="project" value="UniProtKB-UniRule"/>
</dbReference>
<dbReference type="Gene3D" id="6.10.250.2840">
    <property type="match status" value="1"/>
</dbReference>
<dbReference type="Gene3D" id="3.50.50.60">
    <property type="entry name" value="FAD/NAD(P)-binding domain"/>
    <property type="match status" value="1"/>
</dbReference>
<dbReference type="HAMAP" id="MF_03158">
    <property type="entry name" value="THI4"/>
    <property type="match status" value="1"/>
</dbReference>
<dbReference type="InterPro" id="IPR036188">
    <property type="entry name" value="FAD/NAD-bd_sf"/>
</dbReference>
<dbReference type="InterPro" id="IPR027495">
    <property type="entry name" value="Sti35"/>
</dbReference>
<dbReference type="InterPro" id="IPR002922">
    <property type="entry name" value="Thi4_fam"/>
</dbReference>
<dbReference type="NCBIfam" id="TIGR00292">
    <property type="entry name" value="sulfide-dependent adenosine diphosphate thiazole synthase"/>
    <property type="match status" value="1"/>
</dbReference>
<dbReference type="PANTHER" id="PTHR43422">
    <property type="entry name" value="THIAMINE THIAZOLE SYNTHASE"/>
    <property type="match status" value="1"/>
</dbReference>
<dbReference type="PANTHER" id="PTHR43422:SF3">
    <property type="entry name" value="THIAMINE THIAZOLE SYNTHASE"/>
    <property type="match status" value="1"/>
</dbReference>
<dbReference type="Pfam" id="PF01946">
    <property type="entry name" value="Thi4"/>
    <property type="match status" value="1"/>
</dbReference>
<dbReference type="SUPFAM" id="SSF51905">
    <property type="entry name" value="FAD/NAD(P)-binding domain"/>
    <property type="match status" value="1"/>
</dbReference>
<keyword id="KW-0963">Cytoplasm</keyword>
<keyword id="KW-0408">Iron</keyword>
<keyword id="KW-0479">Metal-binding</keyword>
<keyword id="KW-0520">NAD</keyword>
<keyword id="KW-0539">Nucleus</keyword>
<keyword id="KW-1185">Reference proteome</keyword>
<keyword id="KW-0784">Thiamine biosynthesis</keyword>
<keyword id="KW-0808">Transferase</keyword>
<comment type="function">
    <text evidence="1">Involved in biosynthesis of the thiamine precursor thiazole. Catalyzes the conversion of NAD and glycine to adenosine diphosphate 5-(2-hydroxyethyl)-4-methylthiazole-2-carboxylic acid (ADT), an adenylated thiazole intermediate. The reaction includes an iron-dependent sulfide transfer from a conserved cysteine residue of the protein to a thiazole intermediate. The enzyme can only undergo a single turnover, which suggests it is a suicide enzyme. May have additional roles in adaptation to various stress conditions and in DNA damage tolerance.</text>
</comment>
<comment type="catalytic activity">
    <reaction evidence="1">
        <text>[ADP-thiazole synthase]-L-cysteine + glycine + NAD(+) = [ADP-thiazole synthase]-dehydroalanine + ADP-5-ethyl-4-methylthiazole-2-carboxylate + nicotinamide + 3 H2O + 2 H(+)</text>
        <dbReference type="Rhea" id="RHEA:55708"/>
        <dbReference type="Rhea" id="RHEA-COMP:14264"/>
        <dbReference type="Rhea" id="RHEA-COMP:14265"/>
        <dbReference type="ChEBI" id="CHEBI:15377"/>
        <dbReference type="ChEBI" id="CHEBI:15378"/>
        <dbReference type="ChEBI" id="CHEBI:17154"/>
        <dbReference type="ChEBI" id="CHEBI:29950"/>
        <dbReference type="ChEBI" id="CHEBI:57305"/>
        <dbReference type="ChEBI" id="CHEBI:57540"/>
        <dbReference type="ChEBI" id="CHEBI:90873"/>
        <dbReference type="ChEBI" id="CHEBI:139151"/>
        <dbReference type="EC" id="2.4.2.60"/>
    </reaction>
</comment>
<comment type="cofactor">
    <cofactor evidence="1">
        <name>Fe cation</name>
        <dbReference type="ChEBI" id="CHEBI:24875"/>
    </cofactor>
    <text evidence="1">Binds 1 Fe cation per subunit.</text>
</comment>
<comment type="subunit">
    <text evidence="1">Homooctamer.</text>
</comment>
<comment type="subcellular location">
    <subcellularLocation>
        <location evidence="1">Cytoplasm</location>
    </subcellularLocation>
    <subcellularLocation>
        <location evidence="1">Nucleus</location>
    </subcellularLocation>
</comment>
<comment type="PTM">
    <text evidence="1">During the catalytic reaction, a sulfide is transferred from Cys-216 to a reaction intermediate, generating a dehydroalanine residue.</text>
</comment>
<comment type="similarity">
    <text evidence="1">Belongs to the THI4 family.</text>
</comment>
<gene>
    <name evidence="1" type="primary">thiA</name>
    <name type="synonym">ptrA</name>
    <name type="ORF">AO090003000090</name>
</gene>
<reference key="1">
    <citation type="journal article" date="2000" name="Biosci. Biotechnol. Biochem.">
        <title>Pyrithiamine resistance gene (ptrA) of Aspergillus oryzae: cloning, characterization and application as a dominant selectable marker for transformation.</title>
        <authorList>
            <person name="Kubodera T."/>
            <person name="Yamashita N."/>
            <person name="Nishimura A."/>
        </authorList>
    </citation>
    <scope>NUCLEOTIDE SEQUENCE [GENOMIC DNA]</scope>
    <source>
        <strain>HL1034</strain>
    </source>
</reference>
<reference key="2">
    <citation type="journal article" date="2005" name="Nature">
        <title>Genome sequencing and analysis of Aspergillus oryzae.</title>
        <authorList>
            <person name="Machida M."/>
            <person name="Asai K."/>
            <person name="Sano M."/>
            <person name="Tanaka T."/>
            <person name="Kumagai T."/>
            <person name="Terai G."/>
            <person name="Kusumoto K."/>
            <person name="Arima T."/>
            <person name="Akita O."/>
            <person name="Kashiwagi Y."/>
            <person name="Abe K."/>
            <person name="Gomi K."/>
            <person name="Horiuchi H."/>
            <person name="Kitamoto K."/>
            <person name="Kobayashi T."/>
            <person name="Takeuchi M."/>
            <person name="Denning D.W."/>
            <person name="Galagan J.E."/>
            <person name="Nierman W.C."/>
            <person name="Yu J."/>
            <person name="Archer D.B."/>
            <person name="Bennett J.W."/>
            <person name="Bhatnagar D."/>
            <person name="Cleveland T.E."/>
            <person name="Fedorova N.D."/>
            <person name="Gotoh O."/>
            <person name="Horikawa H."/>
            <person name="Hosoyama A."/>
            <person name="Ichinomiya M."/>
            <person name="Igarashi R."/>
            <person name="Iwashita K."/>
            <person name="Juvvadi P.R."/>
            <person name="Kato M."/>
            <person name="Kato Y."/>
            <person name="Kin T."/>
            <person name="Kokubun A."/>
            <person name="Maeda H."/>
            <person name="Maeyama N."/>
            <person name="Maruyama J."/>
            <person name="Nagasaki H."/>
            <person name="Nakajima T."/>
            <person name="Oda K."/>
            <person name="Okada K."/>
            <person name="Paulsen I."/>
            <person name="Sakamoto K."/>
            <person name="Sawano T."/>
            <person name="Takahashi M."/>
            <person name="Takase K."/>
            <person name="Terabayashi Y."/>
            <person name="Wortman J.R."/>
            <person name="Yamada O."/>
            <person name="Yamagata Y."/>
            <person name="Anazawa H."/>
            <person name="Hata Y."/>
            <person name="Koide Y."/>
            <person name="Komori T."/>
            <person name="Koyama Y."/>
            <person name="Minetoki T."/>
            <person name="Suharnan S."/>
            <person name="Tanaka A."/>
            <person name="Isono K."/>
            <person name="Kuhara S."/>
            <person name="Ogasawara N."/>
            <person name="Kikuchi H."/>
        </authorList>
    </citation>
    <scope>NUCLEOTIDE SEQUENCE [LARGE SCALE GENOMIC DNA]</scope>
    <source>
        <strain>ATCC 42149 / RIB 40</strain>
    </source>
</reference>
<sequence length="327" mass="35071">MSPPAAIYEPTVAATGLKGKVVVSETAPVEGASQTKLLDHFGGKWDEFKFAPIRESQVSRAMTRRYFEDLDKYAESDVVIVGAGSCGLSTAYVLAKARPDLKIAIVEASVSPGGGAWLGGQLFSAMVMRRPAEVFLNELGVPYEEDANPNYVVVKHASLFTSTLMSKVLSFPNVKLFNATAVEDLITRPTENGNPQIAGVVVNWTLVTLHHDDHSCMDPNTINAPVIISTTGHDGPFGAFCAKRLVSMGSVDKLGGMRGLDMNSAEDAIVKNTREVTKGLIIGGMELSEIDGFNRMGPTFGAMVLSGVKAAEEALKVFDERQRECAE</sequence>
<organism>
    <name type="scientific">Aspergillus oryzae (strain ATCC 42149 / RIB 40)</name>
    <name type="common">Yellow koji mold</name>
    <dbReference type="NCBI Taxonomy" id="510516"/>
    <lineage>
        <taxon>Eukaryota</taxon>
        <taxon>Fungi</taxon>
        <taxon>Dikarya</taxon>
        <taxon>Ascomycota</taxon>
        <taxon>Pezizomycotina</taxon>
        <taxon>Eurotiomycetes</taxon>
        <taxon>Eurotiomycetidae</taxon>
        <taxon>Eurotiales</taxon>
        <taxon>Aspergillaceae</taxon>
        <taxon>Aspergillus</taxon>
        <taxon>Aspergillus subgen. Circumdati</taxon>
    </lineage>
</organism>
<evidence type="ECO:0000255" key="1">
    <source>
        <dbReference type="HAMAP-Rule" id="MF_03158"/>
    </source>
</evidence>
<evidence type="ECO:0000305" key="2"/>
<proteinExistence type="inferred from homology"/>
<protein>
    <recommendedName>
        <fullName evidence="1">Thiamine thiazole synthase</fullName>
        <ecNumber evidence="1">2.4.2.60</ecNumber>
    </recommendedName>
    <alternativeName>
        <fullName>Pyrithiamine resistance protein</fullName>
    </alternativeName>
    <alternativeName>
        <fullName evidence="1">Thiazole biosynthetic enzyme</fullName>
    </alternativeName>
</protein>